<organism>
    <name type="scientific">Shigella dysenteriae serotype 1 (strain Sd197)</name>
    <dbReference type="NCBI Taxonomy" id="300267"/>
    <lineage>
        <taxon>Bacteria</taxon>
        <taxon>Pseudomonadati</taxon>
        <taxon>Pseudomonadota</taxon>
        <taxon>Gammaproteobacteria</taxon>
        <taxon>Enterobacterales</taxon>
        <taxon>Enterobacteriaceae</taxon>
        <taxon>Shigella</taxon>
    </lineage>
</organism>
<proteinExistence type="inferred from homology"/>
<name>SLYX_SHIDS</name>
<comment type="similarity">
    <text evidence="1">Belongs to the SlyX family.</text>
</comment>
<accession>Q32B18</accession>
<protein>
    <recommendedName>
        <fullName evidence="1">Protein SlyX</fullName>
    </recommendedName>
</protein>
<feature type="chain" id="PRO_0000227083" description="Protein SlyX">
    <location>
        <begin position="1"/>
        <end position="72"/>
    </location>
</feature>
<feature type="region of interest" description="Disordered" evidence="2">
    <location>
        <begin position="52"/>
        <end position="72"/>
    </location>
</feature>
<feature type="compositionally biased region" description="Polar residues" evidence="2">
    <location>
        <begin position="55"/>
        <end position="65"/>
    </location>
</feature>
<keyword id="KW-1185">Reference proteome</keyword>
<dbReference type="EMBL" id="CP000034">
    <property type="protein sequence ID" value="ABB63487.1"/>
    <property type="molecule type" value="Genomic_DNA"/>
</dbReference>
<dbReference type="RefSeq" id="WP_001153615.1">
    <property type="nucleotide sequence ID" value="NC_007606.1"/>
</dbReference>
<dbReference type="RefSeq" id="YP_404978.1">
    <property type="nucleotide sequence ID" value="NC_007606.1"/>
</dbReference>
<dbReference type="SMR" id="Q32B18"/>
<dbReference type="STRING" id="300267.SDY_3509"/>
<dbReference type="EnsemblBacteria" id="ABB63487">
    <property type="protein sequence ID" value="ABB63487"/>
    <property type="gene ID" value="SDY_3509"/>
</dbReference>
<dbReference type="KEGG" id="sdy:SDY_3509"/>
<dbReference type="PATRIC" id="fig|300267.13.peg.4163"/>
<dbReference type="HOGENOM" id="CLU_180796_4_2_6"/>
<dbReference type="Proteomes" id="UP000002716">
    <property type="component" value="Chromosome"/>
</dbReference>
<dbReference type="Gene3D" id="1.20.5.300">
    <property type="match status" value="1"/>
</dbReference>
<dbReference type="HAMAP" id="MF_00715">
    <property type="entry name" value="SlyX"/>
    <property type="match status" value="1"/>
</dbReference>
<dbReference type="InterPro" id="IPR007236">
    <property type="entry name" value="SlyX"/>
</dbReference>
<dbReference type="NCBIfam" id="NF002750">
    <property type="entry name" value="PRK02793.1"/>
    <property type="match status" value="1"/>
</dbReference>
<dbReference type="PANTHER" id="PTHR36508">
    <property type="entry name" value="PROTEIN SLYX"/>
    <property type="match status" value="1"/>
</dbReference>
<dbReference type="PANTHER" id="PTHR36508:SF1">
    <property type="entry name" value="PROTEIN SLYX"/>
    <property type="match status" value="1"/>
</dbReference>
<dbReference type="Pfam" id="PF04102">
    <property type="entry name" value="SlyX"/>
    <property type="match status" value="1"/>
</dbReference>
<gene>
    <name evidence="1" type="primary">slyX</name>
    <name type="ordered locus">SDY_3509</name>
</gene>
<evidence type="ECO:0000255" key="1">
    <source>
        <dbReference type="HAMAP-Rule" id="MF_00715"/>
    </source>
</evidence>
<evidence type="ECO:0000256" key="2">
    <source>
        <dbReference type="SAM" id="MobiDB-lite"/>
    </source>
</evidence>
<reference key="1">
    <citation type="journal article" date="2005" name="Nucleic Acids Res.">
        <title>Genome dynamics and diversity of Shigella species, the etiologic agents of bacillary dysentery.</title>
        <authorList>
            <person name="Yang F."/>
            <person name="Yang J."/>
            <person name="Zhang X."/>
            <person name="Chen L."/>
            <person name="Jiang Y."/>
            <person name="Yan Y."/>
            <person name="Tang X."/>
            <person name="Wang J."/>
            <person name="Xiong Z."/>
            <person name="Dong J."/>
            <person name="Xue Y."/>
            <person name="Zhu Y."/>
            <person name="Xu X."/>
            <person name="Sun L."/>
            <person name="Chen S."/>
            <person name="Nie H."/>
            <person name="Peng J."/>
            <person name="Xu J."/>
            <person name="Wang Y."/>
            <person name="Yuan Z."/>
            <person name="Wen Y."/>
            <person name="Yao Z."/>
            <person name="Shen Y."/>
            <person name="Qiang B."/>
            <person name="Hou Y."/>
            <person name="Yu J."/>
            <person name="Jin Q."/>
        </authorList>
    </citation>
    <scope>NUCLEOTIDE SEQUENCE [LARGE SCALE GENOMIC DNA]</scope>
    <source>
        <strain>Sd197</strain>
    </source>
</reference>
<sequence>MQDLSLEARLAELESRLAFQEITIEELNVTVTAHEMEMAKLRDHLRLLTEKLKASQPSNIASQAEETPPPHY</sequence>